<protein>
    <recommendedName>
        <fullName evidence="1">Mlc titration factor A</fullName>
    </recommendedName>
    <alternativeName>
        <fullName evidence="1">Probable zinc metallopeptidase MtfA</fullName>
        <ecNumber evidence="1">3.4.11.-</ecNumber>
    </alternativeName>
</protein>
<organism>
    <name type="scientific">Escherichia coli (strain K12 / DH10B)</name>
    <dbReference type="NCBI Taxonomy" id="316385"/>
    <lineage>
        <taxon>Bacteria</taxon>
        <taxon>Pseudomonadati</taxon>
        <taxon>Pseudomonadota</taxon>
        <taxon>Gammaproteobacteria</taxon>
        <taxon>Enterobacterales</taxon>
        <taxon>Enterobacteriaceae</taxon>
        <taxon>Escherichia</taxon>
    </lineage>
</organism>
<gene>
    <name evidence="1" type="primary">mtfA</name>
    <name type="ordered locus">ECDH10B_2119</name>
</gene>
<name>MTFA_ECODH</name>
<feature type="chain" id="PRO_1000147836" description="Mlc titration factor A">
    <location>
        <begin position="1"/>
        <end position="265"/>
    </location>
</feature>
<feature type="binding site" evidence="1">
    <location>
        <position position="111"/>
    </location>
    <ligand>
        <name>Zn(2+)</name>
        <dbReference type="ChEBI" id="CHEBI:29105"/>
    </ligand>
</feature>
<feature type="binding site" evidence="1">
    <location>
        <position position="148"/>
    </location>
    <ligand>
        <name>Zn(2+)</name>
        <dbReference type="ChEBI" id="CHEBI:29105"/>
    </ligand>
</feature>
<feature type="binding site" evidence="1">
    <location>
        <position position="152"/>
    </location>
    <ligand>
        <name>Zn(2+)</name>
        <dbReference type="ChEBI" id="CHEBI:29105"/>
    </ligand>
</feature>
<feature type="binding site" evidence="1">
    <location>
        <position position="211"/>
    </location>
    <ligand>
        <name>Zn(2+)</name>
        <dbReference type="ChEBI" id="CHEBI:29105"/>
    </ligand>
</feature>
<accession>B1X6C4</accession>
<comment type="function">
    <text evidence="1">Involved in the modulation of the activity of the glucose-phosphotransferase system (glucose-PTS). Interacts with the transcriptional repressor Mlc, preventing its interaction with DNA and leading to the modulation of expression of genes regulated by Mlc, including ptsG, which encodes the PTS system glucose-specific EIICB component.</text>
</comment>
<comment type="function">
    <text evidence="1">Shows zinc-dependent metallopeptidase activity.</text>
</comment>
<comment type="cofactor">
    <cofactor evidence="1">
        <name>Zn(2+)</name>
        <dbReference type="ChEBI" id="CHEBI:29105"/>
    </cofactor>
    <text evidence="1">Binds 1 zinc ion per subunit.</text>
</comment>
<comment type="subunit">
    <text evidence="1">Interacts with Mlc.</text>
</comment>
<comment type="subcellular location">
    <subcellularLocation>
        <location evidence="1">Cytoplasm</location>
    </subcellularLocation>
</comment>
<comment type="similarity">
    <text evidence="1">Belongs to the MtfA family.</text>
</comment>
<proteinExistence type="inferred from homology"/>
<dbReference type="EC" id="3.4.11.-" evidence="1"/>
<dbReference type="EMBL" id="CP000948">
    <property type="protein sequence ID" value="ACB03156.1"/>
    <property type="molecule type" value="Genomic_DNA"/>
</dbReference>
<dbReference type="RefSeq" id="WP_001302302.1">
    <property type="nucleotide sequence ID" value="NC_010473.1"/>
</dbReference>
<dbReference type="SMR" id="B1X6C4"/>
<dbReference type="MEROPS" id="M90.001"/>
<dbReference type="GeneID" id="75205786"/>
<dbReference type="KEGG" id="ecd:ECDH10B_2119"/>
<dbReference type="HOGENOM" id="CLU_063037_2_0_6"/>
<dbReference type="GO" id="GO:0005829">
    <property type="term" value="C:cytosol"/>
    <property type="evidence" value="ECO:0007669"/>
    <property type="project" value="TreeGrafter"/>
</dbReference>
<dbReference type="GO" id="GO:0004177">
    <property type="term" value="F:aminopeptidase activity"/>
    <property type="evidence" value="ECO:0007669"/>
    <property type="project" value="UniProtKB-UniRule"/>
</dbReference>
<dbReference type="GO" id="GO:0008237">
    <property type="term" value="F:metallopeptidase activity"/>
    <property type="evidence" value="ECO:0007669"/>
    <property type="project" value="UniProtKB-UniRule"/>
</dbReference>
<dbReference type="GO" id="GO:0008270">
    <property type="term" value="F:zinc ion binding"/>
    <property type="evidence" value="ECO:0007669"/>
    <property type="project" value="UniProtKB-UniRule"/>
</dbReference>
<dbReference type="GO" id="GO:0006508">
    <property type="term" value="P:proteolysis"/>
    <property type="evidence" value="ECO:0007669"/>
    <property type="project" value="UniProtKB-KW"/>
</dbReference>
<dbReference type="CDD" id="cd20169">
    <property type="entry name" value="Peptidase_M90_mtfA"/>
    <property type="match status" value="1"/>
</dbReference>
<dbReference type="FunFam" id="1.10.472.150:FF:000001">
    <property type="entry name" value="Protein MtfA"/>
    <property type="match status" value="1"/>
</dbReference>
<dbReference type="FunFam" id="3.40.390.10:FF:000012">
    <property type="entry name" value="Protein MtfA"/>
    <property type="match status" value="1"/>
</dbReference>
<dbReference type="Gene3D" id="3.40.390.10">
    <property type="entry name" value="Collagenase (Catalytic Domain)"/>
    <property type="match status" value="1"/>
</dbReference>
<dbReference type="Gene3D" id="1.10.472.150">
    <property type="entry name" value="Glucose-regulated metallo-peptidase M90, N-terminal domain"/>
    <property type="match status" value="1"/>
</dbReference>
<dbReference type="HAMAP" id="MF_01593">
    <property type="entry name" value="MtfA"/>
    <property type="match status" value="1"/>
</dbReference>
<dbReference type="InterPro" id="IPR024079">
    <property type="entry name" value="MetalloPept_cat_dom_sf"/>
</dbReference>
<dbReference type="InterPro" id="IPR057256">
    <property type="entry name" value="MtfA_enterob"/>
</dbReference>
<dbReference type="InterPro" id="IPR010384">
    <property type="entry name" value="MtfA_fam"/>
</dbReference>
<dbReference type="InterPro" id="IPR042252">
    <property type="entry name" value="MtfA_N"/>
</dbReference>
<dbReference type="NCBIfam" id="NF011939">
    <property type="entry name" value="PRK15410.1"/>
    <property type="match status" value="1"/>
</dbReference>
<dbReference type="PANTHER" id="PTHR30164">
    <property type="entry name" value="MTFA PEPTIDASE"/>
    <property type="match status" value="1"/>
</dbReference>
<dbReference type="PANTHER" id="PTHR30164:SF2">
    <property type="entry name" value="PROTEIN MTFA"/>
    <property type="match status" value="1"/>
</dbReference>
<dbReference type="Pfam" id="PF06167">
    <property type="entry name" value="Peptidase_M90"/>
    <property type="match status" value="1"/>
</dbReference>
<dbReference type="SUPFAM" id="SSF55486">
    <property type="entry name" value="Metalloproteases ('zincins'), catalytic domain"/>
    <property type="match status" value="1"/>
</dbReference>
<keyword id="KW-0031">Aminopeptidase</keyword>
<keyword id="KW-0963">Cytoplasm</keyword>
<keyword id="KW-0378">Hydrolase</keyword>
<keyword id="KW-0479">Metal-binding</keyword>
<keyword id="KW-0482">Metalloprotease</keyword>
<keyword id="KW-0645">Protease</keyword>
<keyword id="KW-0862">Zinc</keyword>
<reference key="1">
    <citation type="journal article" date="2008" name="J. Bacteriol.">
        <title>The complete genome sequence of Escherichia coli DH10B: insights into the biology of a laboratory workhorse.</title>
        <authorList>
            <person name="Durfee T."/>
            <person name="Nelson R."/>
            <person name="Baldwin S."/>
            <person name="Plunkett G. III"/>
            <person name="Burland V."/>
            <person name="Mau B."/>
            <person name="Petrosino J.F."/>
            <person name="Qin X."/>
            <person name="Muzny D.M."/>
            <person name="Ayele M."/>
            <person name="Gibbs R.A."/>
            <person name="Csorgo B."/>
            <person name="Posfai G."/>
            <person name="Weinstock G.M."/>
            <person name="Blattner F.R."/>
        </authorList>
    </citation>
    <scope>NUCLEOTIDE SEQUENCE [LARGE SCALE GENOMIC DNA]</scope>
    <source>
        <strain>K12 / DH10B</strain>
    </source>
</reference>
<sequence length="265" mass="30279">MIKWPWKVQESAHQTALPWQEALSIPLLTCLTEQEQSKLVTLAERFLQQKRLVPLQGFELDSLRSCRIALLFCLPVLELGLEWLDGFHEVLIYPAPFVVDDEWEDDIGLVHNQRIVQSGQSWQQGPIVLNWLDIQDSFDASGFNLIIHEVAHKLDTRNGDRASGVPFIPLREVAGWEHDLHAAMNNIQEEIELVGENAASIDAYAASDPAECFAVLSEYFFSAPELFAPRFPSLWQRFCQFYQQDPLQRLHHANDTDSFSATNVH</sequence>
<evidence type="ECO:0000255" key="1">
    <source>
        <dbReference type="HAMAP-Rule" id="MF_01593"/>
    </source>
</evidence>